<protein>
    <recommendedName>
        <fullName evidence="1">Glycerol kinase</fullName>
        <ecNumber evidence="1">2.7.1.30</ecNumber>
    </recommendedName>
    <alternativeName>
        <fullName evidence="1">ATP:glycerol 3-phosphotransferase</fullName>
    </alternativeName>
    <alternativeName>
        <fullName evidence="1">Glycerokinase</fullName>
        <shortName evidence="1">GK</shortName>
    </alternativeName>
</protein>
<organism>
    <name type="scientific">Bacillus anthracis (strain A0248)</name>
    <dbReference type="NCBI Taxonomy" id="592021"/>
    <lineage>
        <taxon>Bacteria</taxon>
        <taxon>Bacillati</taxon>
        <taxon>Bacillota</taxon>
        <taxon>Bacilli</taxon>
        <taxon>Bacillales</taxon>
        <taxon>Bacillaceae</taxon>
        <taxon>Bacillus</taxon>
        <taxon>Bacillus cereus group</taxon>
    </lineage>
</organism>
<sequence>MKKYILSLDQGTTSSRAILFNKKGEIVHSAQKEFTQHFPKPGWVEHNAQEIWGSILAVIATCLSEADVKPEQIAGIGITNQRETAVVWDKTTGKPIYNAIVWQSRQTAEICDELKEKGYSEMVREKTGLLIDAYFSGTKVKWILDNVEGAREKAENGDLLFGTIDTWLVWKLSGGKAHVTDYSNASRTLMFNIHDLQWDDELLDMLTVPKSMLPEVRPSSEVYGETIDYHFFGQNVPIAGVAGDQQAALFGQACFGEGMAKNTYGTGCFMLMNTGEKAVASEHGLLTTIAWGIDGKVNYALEGSIFVAGSAIQWLRDGMRMFKDASESEVYASRVESTDGVYVVPAFVGLGTPYWDSEVRGAMFGVTRGTTKEHFIRATLESLAYQIKDVLCAMEADSGIELKTLRVDGGAVKNNFLMKFQSDILDVPVERPVINETTALGAAYLAGLAVGYWKNQDEIKEQWHMDKRFEPTMEAETSEELYAGWKKAIEATKAFK</sequence>
<gene>
    <name evidence="1" type="primary">glpK</name>
    <name type="ordered locus">BAA_1120</name>
</gene>
<proteinExistence type="inferred from homology"/>
<dbReference type="EC" id="2.7.1.30" evidence="1"/>
<dbReference type="EMBL" id="CP001598">
    <property type="protein sequence ID" value="ACQ49600.1"/>
    <property type="molecule type" value="Genomic_DNA"/>
</dbReference>
<dbReference type="RefSeq" id="WP_000759993.1">
    <property type="nucleotide sequence ID" value="NC_012659.1"/>
</dbReference>
<dbReference type="SMR" id="C3P2T3"/>
<dbReference type="GeneID" id="45021064"/>
<dbReference type="KEGG" id="bai:BAA_1120"/>
<dbReference type="HOGENOM" id="CLU_009281_2_3_9"/>
<dbReference type="UniPathway" id="UPA00618">
    <property type="reaction ID" value="UER00672"/>
</dbReference>
<dbReference type="GO" id="GO:0005829">
    <property type="term" value="C:cytosol"/>
    <property type="evidence" value="ECO:0007669"/>
    <property type="project" value="TreeGrafter"/>
</dbReference>
<dbReference type="GO" id="GO:0005524">
    <property type="term" value="F:ATP binding"/>
    <property type="evidence" value="ECO:0007669"/>
    <property type="project" value="UniProtKB-UniRule"/>
</dbReference>
<dbReference type="GO" id="GO:0004370">
    <property type="term" value="F:glycerol kinase activity"/>
    <property type="evidence" value="ECO:0000250"/>
    <property type="project" value="UniProtKB"/>
</dbReference>
<dbReference type="GO" id="GO:0019563">
    <property type="term" value="P:glycerol catabolic process"/>
    <property type="evidence" value="ECO:0007669"/>
    <property type="project" value="UniProtKB-UniRule"/>
</dbReference>
<dbReference type="GO" id="GO:0006071">
    <property type="term" value="P:glycerol metabolic process"/>
    <property type="evidence" value="ECO:0000250"/>
    <property type="project" value="UniProtKB"/>
</dbReference>
<dbReference type="GO" id="GO:0006072">
    <property type="term" value="P:glycerol-3-phosphate metabolic process"/>
    <property type="evidence" value="ECO:0007669"/>
    <property type="project" value="InterPro"/>
</dbReference>
<dbReference type="CDD" id="cd07786">
    <property type="entry name" value="FGGY_EcGK_like"/>
    <property type="match status" value="1"/>
</dbReference>
<dbReference type="FunFam" id="3.30.420.40:FF:000007">
    <property type="entry name" value="Glycerol kinase"/>
    <property type="match status" value="1"/>
</dbReference>
<dbReference type="FunFam" id="3.30.420.40:FF:000008">
    <property type="entry name" value="Glycerol kinase"/>
    <property type="match status" value="1"/>
</dbReference>
<dbReference type="Gene3D" id="3.30.420.40">
    <property type="match status" value="2"/>
</dbReference>
<dbReference type="HAMAP" id="MF_00186">
    <property type="entry name" value="Glycerol_kin"/>
    <property type="match status" value="1"/>
</dbReference>
<dbReference type="InterPro" id="IPR043129">
    <property type="entry name" value="ATPase_NBD"/>
</dbReference>
<dbReference type="InterPro" id="IPR000577">
    <property type="entry name" value="Carb_kinase_FGGY"/>
</dbReference>
<dbReference type="InterPro" id="IPR018483">
    <property type="entry name" value="Carb_kinase_FGGY_CS"/>
</dbReference>
<dbReference type="InterPro" id="IPR018485">
    <property type="entry name" value="FGGY_C"/>
</dbReference>
<dbReference type="InterPro" id="IPR018484">
    <property type="entry name" value="FGGY_N"/>
</dbReference>
<dbReference type="InterPro" id="IPR005999">
    <property type="entry name" value="Glycerol_kin"/>
</dbReference>
<dbReference type="NCBIfam" id="TIGR01311">
    <property type="entry name" value="glycerol_kin"/>
    <property type="match status" value="1"/>
</dbReference>
<dbReference type="NCBIfam" id="NF000756">
    <property type="entry name" value="PRK00047.1"/>
    <property type="match status" value="1"/>
</dbReference>
<dbReference type="PANTHER" id="PTHR10196:SF69">
    <property type="entry name" value="GLYCEROL KINASE"/>
    <property type="match status" value="1"/>
</dbReference>
<dbReference type="PANTHER" id="PTHR10196">
    <property type="entry name" value="SUGAR KINASE"/>
    <property type="match status" value="1"/>
</dbReference>
<dbReference type="Pfam" id="PF02782">
    <property type="entry name" value="FGGY_C"/>
    <property type="match status" value="1"/>
</dbReference>
<dbReference type="Pfam" id="PF00370">
    <property type="entry name" value="FGGY_N"/>
    <property type="match status" value="1"/>
</dbReference>
<dbReference type="PIRSF" id="PIRSF000538">
    <property type="entry name" value="GlpK"/>
    <property type="match status" value="1"/>
</dbReference>
<dbReference type="SUPFAM" id="SSF53067">
    <property type="entry name" value="Actin-like ATPase domain"/>
    <property type="match status" value="2"/>
</dbReference>
<dbReference type="PROSITE" id="PS00933">
    <property type="entry name" value="FGGY_KINASES_1"/>
    <property type="match status" value="1"/>
</dbReference>
<dbReference type="PROSITE" id="PS00445">
    <property type="entry name" value="FGGY_KINASES_2"/>
    <property type="match status" value="1"/>
</dbReference>
<comment type="function">
    <text evidence="1">Key enzyme in the regulation of glycerol uptake and metabolism. Catalyzes the phosphorylation of glycerol to yield sn-glycerol 3-phosphate.</text>
</comment>
<comment type="catalytic activity">
    <reaction evidence="1">
        <text>glycerol + ATP = sn-glycerol 3-phosphate + ADP + H(+)</text>
        <dbReference type="Rhea" id="RHEA:21644"/>
        <dbReference type="ChEBI" id="CHEBI:15378"/>
        <dbReference type="ChEBI" id="CHEBI:17754"/>
        <dbReference type="ChEBI" id="CHEBI:30616"/>
        <dbReference type="ChEBI" id="CHEBI:57597"/>
        <dbReference type="ChEBI" id="CHEBI:456216"/>
        <dbReference type="EC" id="2.7.1.30"/>
    </reaction>
</comment>
<comment type="activity regulation">
    <text evidence="1">Activated by phosphorylation and inhibited by fructose 1,6-bisphosphate (FBP).</text>
</comment>
<comment type="pathway">
    <text evidence="1">Polyol metabolism; glycerol degradation via glycerol kinase pathway; sn-glycerol 3-phosphate from glycerol: step 1/1.</text>
</comment>
<comment type="subunit">
    <text evidence="1">Homotetramer and homodimer (in equilibrium).</text>
</comment>
<comment type="PTM">
    <text evidence="1">The phosphoenolpyruvate-dependent sugar phosphotransferase system (PTS), including enzyme I, and histidine-containing protein (HPr) are required for the phosphorylation, which leads to the activation of the enzyme.</text>
</comment>
<comment type="similarity">
    <text evidence="1">Belongs to the FGGY kinase family.</text>
</comment>
<evidence type="ECO:0000255" key="1">
    <source>
        <dbReference type="HAMAP-Rule" id="MF_00186"/>
    </source>
</evidence>
<name>GLPK_BACAA</name>
<keyword id="KW-0067">ATP-binding</keyword>
<keyword id="KW-0319">Glycerol metabolism</keyword>
<keyword id="KW-0418">Kinase</keyword>
<keyword id="KW-0547">Nucleotide-binding</keyword>
<keyword id="KW-0597">Phosphoprotein</keyword>
<keyword id="KW-0808">Transferase</keyword>
<feature type="chain" id="PRO_1000124179" description="Glycerol kinase">
    <location>
        <begin position="1"/>
        <end position="496"/>
    </location>
</feature>
<feature type="binding site" evidence="1">
    <location>
        <position position="12"/>
    </location>
    <ligand>
        <name>ADP</name>
        <dbReference type="ChEBI" id="CHEBI:456216"/>
    </ligand>
</feature>
<feature type="binding site" evidence="1">
    <location>
        <position position="12"/>
    </location>
    <ligand>
        <name>ATP</name>
        <dbReference type="ChEBI" id="CHEBI:30616"/>
    </ligand>
</feature>
<feature type="binding site" evidence="1">
    <location>
        <position position="12"/>
    </location>
    <ligand>
        <name>sn-glycerol 3-phosphate</name>
        <dbReference type="ChEBI" id="CHEBI:57597"/>
    </ligand>
</feature>
<feature type="binding site" evidence="1">
    <location>
        <position position="13"/>
    </location>
    <ligand>
        <name>ATP</name>
        <dbReference type="ChEBI" id="CHEBI:30616"/>
    </ligand>
</feature>
<feature type="binding site" evidence="1">
    <location>
        <position position="14"/>
    </location>
    <ligand>
        <name>ATP</name>
        <dbReference type="ChEBI" id="CHEBI:30616"/>
    </ligand>
</feature>
<feature type="binding site" evidence="1">
    <location>
        <position position="16"/>
    </location>
    <ligand>
        <name>ADP</name>
        <dbReference type="ChEBI" id="CHEBI:456216"/>
    </ligand>
</feature>
<feature type="binding site" evidence="1">
    <location>
        <position position="82"/>
    </location>
    <ligand>
        <name>glycerol</name>
        <dbReference type="ChEBI" id="CHEBI:17754"/>
    </ligand>
</feature>
<feature type="binding site" evidence="1">
    <location>
        <position position="82"/>
    </location>
    <ligand>
        <name>sn-glycerol 3-phosphate</name>
        <dbReference type="ChEBI" id="CHEBI:57597"/>
    </ligand>
</feature>
<feature type="binding site" evidence="1">
    <location>
        <position position="83"/>
    </location>
    <ligand>
        <name>glycerol</name>
        <dbReference type="ChEBI" id="CHEBI:17754"/>
    </ligand>
</feature>
<feature type="binding site" evidence="1">
    <location>
        <position position="83"/>
    </location>
    <ligand>
        <name>sn-glycerol 3-phosphate</name>
        <dbReference type="ChEBI" id="CHEBI:57597"/>
    </ligand>
</feature>
<feature type="binding site" evidence="1">
    <location>
        <position position="134"/>
    </location>
    <ligand>
        <name>glycerol</name>
        <dbReference type="ChEBI" id="CHEBI:17754"/>
    </ligand>
</feature>
<feature type="binding site" evidence="1">
    <location>
        <position position="134"/>
    </location>
    <ligand>
        <name>sn-glycerol 3-phosphate</name>
        <dbReference type="ChEBI" id="CHEBI:57597"/>
    </ligand>
</feature>
<feature type="binding site" evidence="1">
    <location>
        <position position="244"/>
    </location>
    <ligand>
        <name>glycerol</name>
        <dbReference type="ChEBI" id="CHEBI:17754"/>
    </ligand>
</feature>
<feature type="binding site" evidence="1">
    <location>
        <position position="244"/>
    </location>
    <ligand>
        <name>sn-glycerol 3-phosphate</name>
        <dbReference type="ChEBI" id="CHEBI:57597"/>
    </ligand>
</feature>
<feature type="binding site" evidence="1">
    <location>
        <position position="245"/>
    </location>
    <ligand>
        <name>glycerol</name>
        <dbReference type="ChEBI" id="CHEBI:17754"/>
    </ligand>
</feature>
<feature type="binding site" evidence="1">
    <location>
        <position position="266"/>
    </location>
    <ligand>
        <name>ADP</name>
        <dbReference type="ChEBI" id="CHEBI:456216"/>
    </ligand>
</feature>
<feature type="binding site" evidence="1">
    <location>
        <position position="266"/>
    </location>
    <ligand>
        <name>ATP</name>
        <dbReference type="ChEBI" id="CHEBI:30616"/>
    </ligand>
</feature>
<feature type="binding site" evidence="1">
    <location>
        <position position="309"/>
    </location>
    <ligand>
        <name>ADP</name>
        <dbReference type="ChEBI" id="CHEBI:456216"/>
    </ligand>
</feature>
<feature type="binding site" evidence="1">
    <location>
        <position position="309"/>
    </location>
    <ligand>
        <name>ATP</name>
        <dbReference type="ChEBI" id="CHEBI:30616"/>
    </ligand>
</feature>
<feature type="binding site" evidence="1">
    <location>
        <position position="313"/>
    </location>
    <ligand>
        <name>ATP</name>
        <dbReference type="ChEBI" id="CHEBI:30616"/>
    </ligand>
</feature>
<feature type="binding site" evidence="1">
    <location>
        <position position="410"/>
    </location>
    <ligand>
        <name>ADP</name>
        <dbReference type="ChEBI" id="CHEBI:456216"/>
    </ligand>
</feature>
<feature type="binding site" evidence="1">
    <location>
        <position position="410"/>
    </location>
    <ligand>
        <name>ATP</name>
        <dbReference type="ChEBI" id="CHEBI:30616"/>
    </ligand>
</feature>
<feature type="binding site" evidence="1">
    <location>
        <position position="414"/>
    </location>
    <ligand>
        <name>ADP</name>
        <dbReference type="ChEBI" id="CHEBI:456216"/>
    </ligand>
</feature>
<feature type="modified residue" description="Phosphohistidine; by HPr" evidence="1">
    <location>
        <position position="230"/>
    </location>
</feature>
<accession>C3P2T3</accession>
<reference key="1">
    <citation type="submission" date="2009-04" db="EMBL/GenBank/DDBJ databases">
        <title>Genome sequence of Bacillus anthracis A0248.</title>
        <authorList>
            <person name="Dodson R.J."/>
            <person name="Munk A.C."/>
            <person name="Bruce D."/>
            <person name="Detter C."/>
            <person name="Tapia R."/>
            <person name="Sutton G."/>
            <person name="Sims D."/>
            <person name="Brettin T."/>
        </authorList>
    </citation>
    <scope>NUCLEOTIDE SEQUENCE [LARGE SCALE GENOMIC DNA]</scope>
    <source>
        <strain>A0248</strain>
    </source>
</reference>